<evidence type="ECO:0000250" key="1"/>
<evidence type="ECO:0000250" key="2">
    <source>
        <dbReference type="UniProtKB" id="P80321"/>
    </source>
</evidence>
<evidence type="ECO:0000305" key="3"/>
<comment type="induction">
    <text>By wounding.</text>
</comment>
<comment type="similarity">
    <text evidence="3">Belongs to the Bowman-Birk serine protease inhibitor family.</text>
</comment>
<organism>
    <name type="scientific">Medicago sativa</name>
    <name type="common">Alfalfa</name>
    <dbReference type="NCBI Taxonomy" id="3879"/>
    <lineage>
        <taxon>Eukaryota</taxon>
        <taxon>Viridiplantae</taxon>
        <taxon>Streptophyta</taxon>
        <taxon>Embryophyta</taxon>
        <taxon>Tracheophyta</taxon>
        <taxon>Spermatophyta</taxon>
        <taxon>Magnoliopsida</taxon>
        <taxon>eudicotyledons</taxon>
        <taxon>Gunneridae</taxon>
        <taxon>Pentapetalae</taxon>
        <taxon>rosids</taxon>
        <taxon>fabids</taxon>
        <taxon>Fabales</taxon>
        <taxon>Fabaceae</taxon>
        <taxon>Papilionoideae</taxon>
        <taxon>50 kb inversion clade</taxon>
        <taxon>NPAAA clade</taxon>
        <taxon>Hologalegina</taxon>
        <taxon>IRL clade</taxon>
        <taxon>Trifolieae</taxon>
        <taxon>Medicago</taxon>
    </lineage>
</organism>
<name>IBBWT_MEDSA</name>
<keyword id="KW-0903">Direct protein sequencing</keyword>
<keyword id="KW-1015">Disulfide bond</keyword>
<keyword id="KW-0646">Protease inhibitor</keyword>
<keyword id="KW-0722">Serine protease inhibitor</keyword>
<sequence length="58" mass="6337">TTACCNFCPCTRSIPPQCRCTDIGETCHSACKTCLCTKSIPPQCHCADITNFCYPKCN</sequence>
<accession>P16346</accession>
<feature type="chain" id="PRO_0000105844" description="Bowman-Birk type wound-induced trypsin inhibitor">
    <location>
        <begin position="1"/>
        <end position="58"/>
    </location>
</feature>
<feature type="site" description="Reactive bond for trypsin" evidence="1">
    <location>
        <begin position="12"/>
        <end position="13"/>
    </location>
</feature>
<feature type="site" description="Reactive bond for trypsin" evidence="1">
    <location>
        <begin position="38"/>
        <end position="39"/>
    </location>
</feature>
<feature type="disulfide bond" evidence="2">
    <location>
        <begin position="4"/>
        <end position="57"/>
    </location>
</feature>
<feature type="disulfide bond" evidence="2">
    <location>
        <begin position="5"/>
        <end position="20"/>
    </location>
</feature>
<feature type="disulfide bond" evidence="2">
    <location>
        <begin position="8"/>
        <end position="53"/>
    </location>
</feature>
<feature type="disulfide bond" evidence="2">
    <location>
        <begin position="10"/>
        <end position="18"/>
    </location>
</feature>
<feature type="disulfide bond" evidence="2">
    <location>
        <begin position="27"/>
        <end position="34"/>
    </location>
</feature>
<feature type="disulfide bond" evidence="2">
    <location>
        <begin position="31"/>
        <end position="46"/>
    </location>
</feature>
<feature type="disulfide bond" evidence="2">
    <location>
        <begin position="36"/>
        <end position="44"/>
    </location>
</feature>
<feature type="sequence variant">
    <original>H</original>
    <variation>R</variation>
    <location>
        <position position="45"/>
    </location>
</feature>
<feature type="sequence variant">
    <original>A</original>
    <variation>T</variation>
    <location>
        <position position="47"/>
    </location>
</feature>
<protein>
    <recommendedName>
        <fullName>Bowman-Birk type wound-induced trypsin inhibitor</fullName>
    </recommendedName>
</protein>
<dbReference type="SMR" id="P16346"/>
<dbReference type="MEROPS" id="I12.001"/>
<dbReference type="GO" id="GO:0005576">
    <property type="term" value="C:extracellular region"/>
    <property type="evidence" value="ECO:0007669"/>
    <property type="project" value="InterPro"/>
</dbReference>
<dbReference type="GO" id="GO:0004867">
    <property type="term" value="F:serine-type endopeptidase inhibitor activity"/>
    <property type="evidence" value="ECO:0007669"/>
    <property type="project" value="UniProtKB-KW"/>
</dbReference>
<dbReference type="CDD" id="cd00023">
    <property type="entry name" value="BBI"/>
    <property type="match status" value="1"/>
</dbReference>
<dbReference type="Gene3D" id="2.10.69.10">
    <property type="entry name" value="Cysteine Protease (Bromelain) Inhibitor, subunit H"/>
    <property type="match status" value="1"/>
</dbReference>
<dbReference type="InterPro" id="IPR035995">
    <property type="entry name" value="Bowman-Birk_prot_inh"/>
</dbReference>
<dbReference type="InterPro" id="IPR000877">
    <property type="entry name" value="Prot_inh_BBI"/>
</dbReference>
<dbReference type="Pfam" id="PF00228">
    <property type="entry name" value="Bowman-Birk_leg"/>
    <property type="match status" value="2"/>
</dbReference>
<dbReference type="SMART" id="SM00269">
    <property type="entry name" value="BowB"/>
    <property type="match status" value="1"/>
</dbReference>
<dbReference type="SUPFAM" id="SSF57247">
    <property type="entry name" value="Bowman-Birk inhibitor, BBI"/>
    <property type="match status" value="1"/>
</dbReference>
<dbReference type="PROSITE" id="PS00281">
    <property type="entry name" value="BOWMAN_BIRK"/>
    <property type="match status" value="1"/>
</dbReference>
<proteinExistence type="evidence at protein level"/>
<reference key="1">
    <citation type="journal article" date="1985" name="Biochemistry">
        <title>Wound-induced trypsin inhibitor in alfalfa leaves: identity as a member of the Bowman-Birk inhibitor family.</title>
        <authorList>
            <person name="Brown W.E."/>
            <person name="Takio K."/>
            <person name="Titani K."/>
            <person name="Ryan C.A."/>
        </authorList>
    </citation>
    <scope>PROTEIN SEQUENCE</scope>
    <source>
        <tissue>Leaf</tissue>
    </source>
</reference>